<gene>
    <name type="primary">TLX2</name>
    <name type="synonym">HOX11L1</name>
    <name type="synonym">NCX</name>
</gene>
<name>TLX2_HUMAN</name>
<sequence>MEPGMLGPHNLPHHEPISFGIDQILSGPETPGGGLGLGRGGQGHGENGAFSGGYHGASGYGPAGSLAPLPGSSGVGPGGVIRVPAHRPLPVPPPAGGAPAVPGPSGLGGAGGLAGLTFPWMDSGRRFAKDRLTAALSPFSGTRRIGHPYQNRTPPKRKKPRTSFSRSQVLELERRFLRQKYLASAERAALAKALRMTDAQVKTWFQNRRTKWRRQTAEEREAERHRAGRLLLHLQQDALPRPLRPPLPPDPLCLHNSSLFALQNLQPWAEDNKVASVSGLASVV</sequence>
<dbReference type="EMBL" id="AB008501">
    <property type="protein sequence ID" value="BAA83463.1"/>
    <property type="molecule type" value="mRNA"/>
</dbReference>
<dbReference type="EMBL" id="AJ002607">
    <property type="protein sequence ID" value="CAA05636.1"/>
    <property type="molecule type" value="Genomic_DNA"/>
</dbReference>
<dbReference type="EMBL" id="AJ002608">
    <property type="protein sequence ID" value="CAA05636.1"/>
    <property type="status" value="JOINED"/>
    <property type="molecule type" value="Genomic_DNA"/>
</dbReference>
<dbReference type="EMBL" id="AJ002609">
    <property type="protein sequence ID" value="CAA05636.1"/>
    <property type="status" value="JOINED"/>
    <property type="molecule type" value="Genomic_DNA"/>
</dbReference>
<dbReference type="EMBL" id="AC005041">
    <property type="status" value="NOT_ANNOTATED_CDS"/>
    <property type="molecule type" value="Genomic_DNA"/>
</dbReference>
<dbReference type="EMBL" id="BC006356">
    <property type="protein sequence ID" value="AAH06356.1"/>
    <property type="molecule type" value="mRNA"/>
</dbReference>
<dbReference type="CCDS" id="CCDS1947.1"/>
<dbReference type="RefSeq" id="NP_057254.1">
    <property type="nucleotide sequence ID" value="NM_016170.5"/>
</dbReference>
<dbReference type="PDB" id="3A03">
    <property type="method" value="X-ray"/>
    <property type="resolution" value="1.54 A"/>
    <property type="chains" value="A=162-216"/>
</dbReference>
<dbReference type="PDBsum" id="3A03"/>
<dbReference type="SMR" id="O43763"/>
<dbReference type="BioGRID" id="109436">
    <property type="interactions" value="140"/>
</dbReference>
<dbReference type="ELM" id="O43763"/>
<dbReference type="FunCoup" id="O43763">
    <property type="interactions" value="360"/>
</dbReference>
<dbReference type="IntAct" id="O43763">
    <property type="interactions" value="135"/>
</dbReference>
<dbReference type="STRING" id="9606.ENSP00000233638"/>
<dbReference type="iPTMnet" id="O43763"/>
<dbReference type="PhosphoSitePlus" id="O43763"/>
<dbReference type="BioMuta" id="TLX2"/>
<dbReference type="MassIVE" id="O43763"/>
<dbReference type="PaxDb" id="9606-ENSP00000233638"/>
<dbReference type="PeptideAtlas" id="O43763"/>
<dbReference type="Antibodypedia" id="16736">
    <property type="antibodies" value="70 antibodies from 21 providers"/>
</dbReference>
<dbReference type="DNASU" id="3196"/>
<dbReference type="Ensembl" id="ENST00000233638.8">
    <property type="protein sequence ID" value="ENSP00000233638.6"/>
    <property type="gene ID" value="ENSG00000115297.11"/>
</dbReference>
<dbReference type="GeneID" id="3196"/>
<dbReference type="KEGG" id="hsa:3196"/>
<dbReference type="MANE-Select" id="ENST00000233638.8">
    <property type="protein sequence ID" value="ENSP00000233638.6"/>
    <property type="RefSeq nucleotide sequence ID" value="NM_016170.5"/>
    <property type="RefSeq protein sequence ID" value="NP_057254.1"/>
</dbReference>
<dbReference type="UCSC" id="uc002smb.3">
    <property type="organism name" value="human"/>
</dbReference>
<dbReference type="AGR" id="HGNC:5057"/>
<dbReference type="CTD" id="3196"/>
<dbReference type="DisGeNET" id="3196"/>
<dbReference type="GeneCards" id="TLX2"/>
<dbReference type="HGNC" id="HGNC:5057">
    <property type="gene designation" value="TLX2"/>
</dbReference>
<dbReference type="HPA" id="ENSG00000115297">
    <property type="expression patterns" value="Tissue enhanced (adrenal gland, retina, testis)"/>
</dbReference>
<dbReference type="MIM" id="604240">
    <property type="type" value="gene"/>
</dbReference>
<dbReference type="neXtProt" id="NX_O43763"/>
<dbReference type="OpenTargets" id="ENSG00000115297"/>
<dbReference type="PharmGKB" id="PA35096"/>
<dbReference type="VEuPathDB" id="HostDB:ENSG00000115297"/>
<dbReference type="eggNOG" id="KOG0488">
    <property type="taxonomic scope" value="Eukaryota"/>
</dbReference>
<dbReference type="GeneTree" id="ENSGT00940000162452"/>
<dbReference type="HOGENOM" id="CLU_053409_1_0_1"/>
<dbReference type="InParanoid" id="O43763"/>
<dbReference type="OMA" id="HNLAHHE"/>
<dbReference type="OrthoDB" id="9451579at2759"/>
<dbReference type="PAN-GO" id="O43763">
    <property type="GO annotations" value="5 GO annotations based on evolutionary models"/>
</dbReference>
<dbReference type="PhylomeDB" id="O43763"/>
<dbReference type="TreeFam" id="TF325347"/>
<dbReference type="PathwayCommons" id="O43763"/>
<dbReference type="SignaLink" id="O43763"/>
<dbReference type="BioGRID-ORCS" id="3196">
    <property type="hits" value="9 hits in 1166 CRISPR screens"/>
</dbReference>
<dbReference type="EvolutionaryTrace" id="O43763"/>
<dbReference type="GeneWiki" id="TLX2"/>
<dbReference type="GenomeRNAi" id="3196"/>
<dbReference type="Pharos" id="O43763">
    <property type="development level" value="Tbio"/>
</dbReference>
<dbReference type="PRO" id="PR:O43763"/>
<dbReference type="Proteomes" id="UP000005640">
    <property type="component" value="Chromosome 2"/>
</dbReference>
<dbReference type="RNAct" id="O43763">
    <property type="molecule type" value="protein"/>
</dbReference>
<dbReference type="Bgee" id="ENSG00000115297">
    <property type="expression patterns" value="Expressed in primordial germ cell in gonad and 58 other cell types or tissues"/>
</dbReference>
<dbReference type="ExpressionAtlas" id="O43763">
    <property type="expression patterns" value="baseline and differential"/>
</dbReference>
<dbReference type="GO" id="GO:0000785">
    <property type="term" value="C:chromatin"/>
    <property type="evidence" value="ECO:0000247"/>
    <property type="project" value="NTNU_SB"/>
</dbReference>
<dbReference type="GO" id="GO:0005737">
    <property type="term" value="C:cytoplasm"/>
    <property type="evidence" value="ECO:0007669"/>
    <property type="project" value="Ensembl"/>
</dbReference>
<dbReference type="GO" id="GO:0005634">
    <property type="term" value="C:nucleus"/>
    <property type="evidence" value="ECO:0000318"/>
    <property type="project" value="GO_Central"/>
</dbReference>
<dbReference type="GO" id="GO:0001228">
    <property type="term" value="F:DNA-binding transcription activator activity, RNA polymerase II-specific"/>
    <property type="evidence" value="ECO:0000314"/>
    <property type="project" value="NTNU_SB"/>
</dbReference>
<dbReference type="GO" id="GO:0000981">
    <property type="term" value="F:DNA-binding transcription factor activity, RNA polymerase II-specific"/>
    <property type="evidence" value="ECO:0000247"/>
    <property type="project" value="NTNU_SB"/>
</dbReference>
<dbReference type="GO" id="GO:0043565">
    <property type="term" value="F:sequence-specific DNA binding"/>
    <property type="evidence" value="ECO:0000314"/>
    <property type="project" value="NTNU_SB"/>
</dbReference>
<dbReference type="GO" id="GO:1990837">
    <property type="term" value="F:sequence-specific double-stranded DNA binding"/>
    <property type="evidence" value="ECO:0000314"/>
    <property type="project" value="ARUK-UCL"/>
</dbReference>
<dbReference type="GO" id="GO:0048513">
    <property type="term" value="P:animal organ development"/>
    <property type="evidence" value="ECO:0000318"/>
    <property type="project" value="GO_Central"/>
</dbReference>
<dbReference type="GO" id="GO:0048484">
    <property type="term" value="P:enteric nervous system development"/>
    <property type="evidence" value="ECO:0007669"/>
    <property type="project" value="Ensembl"/>
</dbReference>
<dbReference type="GO" id="GO:0001707">
    <property type="term" value="P:mesoderm formation"/>
    <property type="evidence" value="ECO:0007669"/>
    <property type="project" value="Ensembl"/>
</dbReference>
<dbReference type="GO" id="GO:0050774">
    <property type="term" value="P:negative regulation of dendrite morphogenesis"/>
    <property type="evidence" value="ECO:0007669"/>
    <property type="project" value="Ensembl"/>
</dbReference>
<dbReference type="GO" id="GO:0045944">
    <property type="term" value="P:positive regulation of transcription by RNA polymerase II"/>
    <property type="evidence" value="ECO:0000314"/>
    <property type="project" value="NTNU_SB"/>
</dbReference>
<dbReference type="GO" id="GO:0006357">
    <property type="term" value="P:regulation of transcription by RNA polymerase II"/>
    <property type="evidence" value="ECO:0000318"/>
    <property type="project" value="GO_Central"/>
</dbReference>
<dbReference type="CDD" id="cd00086">
    <property type="entry name" value="homeodomain"/>
    <property type="match status" value="1"/>
</dbReference>
<dbReference type="FunFam" id="1.10.10.60:FF:000040">
    <property type="entry name" value="T-cell leukemia homeobox protein 3"/>
    <property type="match status" value="1"/>
</dbReference>
<dbReference type="Gene3D" id="1.10.10.60">
    <property type="entry name" value="Homeodomain-like"/>
    <property type="match status" value="1"/>
</dbReference>
<dbReference type="InterPro" id="IPR001356">
    <property type="entry name" value="HD"/>
</dbReference>
<dbReference type="InterPro" id="IPR020479">
    <property type="entry name" value="HD_metazoa"/>
</dbReference>
<dbReference type="InterPro" id="IPR017970">
    <property type="entry name" value="Homeobox_CS"/>
</dbReference>
<dbReference type="InterPro" id="IPR009057">
    <property type="entry name" value="Homeodomain-like_sf"/>
</dbReference>
<dbReference type="InterPro" id="IPR042247">
    <property type="entry name" value="TLX1/2/3"/>
</dbReference>
<dbReference type="PANTHER" id="PTHR45921">
    <property type="entry name" value="IP01054P"/>
    <property type="match status" value="1"/>
</dbReference>
<dbReference type="PANTHER" id="PTHR45921:SF3">
    <property type="entry name" value="T-CELL LEUKEMIA HOMEOBOX PROTEIN 2"/>
    <property type="match status" value="1"/>
</dbReference>
<dbReference type="Pfam" id="PF00046">
    <property type="entry name" value="Homeodomain"/>
    <property type="match status" value="1"/>
</dbReference>
<dbReference type="PRINTS" id="PR00024">
    <property type="entry name" value="HOMEOBOX"/>
</dbReference>
<dbReference type="SMART" id="SM00389">
    <property type="entry name" value="HOX"/>
    <property type="match status" value="1"/>
</dbReference>
<dbReference type="SUPFAM" id="SSF46689">
    <property type="entry name" value="Homeodomain-like"/>
    <property type="match status" value="1"/>
</dbReference>
<dbReference type="PROSITE" id="PS00027">
    <property type="entry name" value="HOMEOBOX_1"/>
    <property type="match status" value="1"/>
</dbReference>
<dbReference type="PROSITE" id="PS50071">
    <property type="entry name" value="HOMEOBOX_2"/>
    <property type="match status" value="1"/>
</dbReference>
<organism>
    <name type="scientific">Homo sapiens</name>
    <name type="common">Human</name>
    <dbReference type="NCBI Taxonomy" id="9606"/>
    <lineage>
        <taxon>Eukaryota</taxon>
        <taxon>Metazoa</taxon>
        <taxon>Chordata</taxon>
        <taxon>Craniata</taxon>
        <taxon>Vertebrata</taxon>
        <taxon>Euteleostomi</taxon>
        <taxon>Mammalia</taxon>
        <taxon>Eutheria</taxon>
        <taxon>Euarchontoglires</taxon>
        <taxon>Primates</taxon>
        <taxon>Haplorrhini</taxon>
        <taxon>Catarrhini</taxon>
        <taxon>Hominidae</taxon>
        <taxon>Homo</taxon>
    </lineage>
</organism>
<feature type="chain" id="PRO_0000049336" description="T-cell leukemia homeobox protein 2">
    <location>
        <begin position="1"/>
        <end position="284"/>
    </location>
</feature>
<feature type="DNA-binding region" description="Homeobox" evidence="2">
    <location>
        <begin position="157"/>
        <end position="216"/>
    </location>
</feature>
<feature type="region of interest" description="Disordered" evidence="3">
    <location>
        <begin position="1"/>
        <end position="50"/>
    </location>
</feature>
<feature type="region of interest" description="Disordered" evidence="3">
    <location>
        <begin position="78"/>
        <end position="106"/>
    </location>
</feature>
<feature type="region of interest" description="Disordered" evidence="3">
    <location>
        <begin position="139"/>
        <end position="166"/>
    </location>
</feature>
<feature type="compositionally biased region" description="Gly residues" evidence="3">
    <location>
        <begin position="30"/>
        <end position="50"/>
    </location>
</feature>
<feature type="compositionally biased region" description="Pro residues" evidence="3">
    <location>
        <begin position="87"/>
        <end position="96"/>
    </location>
</feature>
<feature type="sequence conflict" description="In Ref. 2; CAA05636." evidence="4" ref="2">
    <original>P</original>
    <variation>A</variation>
    <location>
        <position position="16"/>
    </location>
</feature>
<feature type="sequence conflict" description="In Ref. 2; CAA05636." evidence="4" ref="2">
    <original>TPG</original>
    <variation>PR</variation>
    <location>
        <begin position="30"/>
        <end position="32"/>
    </location>
</feature>
<feature type="sequence conflict" description="In Ref. 2; CAA05636." evidence="4" ref="2">
    <original>LGRGGQGHGENG</original>
    <variation>WVAGQVIGEWA</variation>
    <location>
        <begin position="37"/>
        <end position="48"/>
    </location>
</feature>
<feature type="sequence conflict" description="In Ref. 2; CAA05636." evidence="4" ref="2">
    <location>
        <begin position="100"/>
        <end position="102"/>
    </location>
</feature>
<feature type="sequence conflict" description="In Ref. 2; CAA05636." evidence="4" ref="2">
    <original>RLTAAL</original>
    <variation>PAV</variation>
    <location>
        <begin position="131"/>
        <end position="136"/>
    </location>
</feature>
<feature type="sequence conflict" description="In Ref. 5; no nucleotide entry." evidence="4" ref="5">
    <original>M</original>
    <variation>T</variation>
    <location>
        <position position="196"/>
    </location>
</feature>
<feature type="sequence conflict" description="In Ref. 2; CAA05636." evidence="4" ref="2">
    <location>
        <position position="219"/>
    </location>
</feature>
<feature type="sequence conflict" description="In Ref. 2; CAA05636." evidence="4" ref="2">
    <original>R</original>
    <variation>T</variation>
    <location>
        <position position="241"/>
    </location>
</feature>
<feature type="sequence conflict" description="In Ref. 2; CAA05636." evidence="4" ref="2">
    <original>V</original>
    <variation>A</variation>
    <location>
        <position position="274"/>
    </location>
</feature>
<feature type="helix" evidence="5">
    <location>
        <begin position="166"/>
        <end position="178"/>
    </location>
</feature>
<feature type="helix" evidence="5">
    <location>
        <begin position="184"/>
        <end position="194"/>
    </location>
</feature>
<feature type="helix" evidence="5">
    <location>
        <begin position="198"/>
        <end position="215"/>
    </location>
</feature>
<comment type="function">
    <text evidence="1">Transcription activator that binds DNA elements with the consensus sequence 5'-CGGTAATTGG-3'. Binds DNA via its homeobox. Required for normal cell death of enteric neurons in the gastrointestinal tract. Required for normal development of the enteric nervous system, and for proper development of normal motility of the gastrointestinal tract (By similarity).</text>
</comment>
<comment type="interaction">
    <interactant intactId="EBI-6101484">
        <id>O43763</id>
    </interactant>
    <interactant intactId="EBI-11962084">
        <id>Q3LI66</id>
        <label>KRTAP6-2</label>
    </interactant>
    <organismsDiffer>false</organismsDiffer>
    <experiments>3</experiments>
</comment>
<comment type="interaction">
    <interactant intactId="EBI-6101484">
        <id>O43763</id>
    </interactant>
    <interactant intactId="EBI-12029004">
        <id>P78424</id>
        <label>POU6F2</label>
    </interactant>
    <organismsDiffer>false</organismsDiffer>
    <experiments>3</experiments>
</comment>
<comment type="subcellular location">
    <subcellularLocation>
        <location evidence="4">Nucleus</location>
    </subcellularLocation>
</comment>
<keyword id="KW-0002">3D-structure</keyword>
<keyword id="KW-0010">Activator</keyword>
<keyword id="KW-0217">Developmental protein</keyword>
<keyword id="KW-0238">DNA-binding</keyword>
<keyword id="KW-0371">Homeobox</keyword>
<keyword id="KW-0539">Nucleus</keyword>
<keyword id="KW-1267">Proteomics identification</keyword>
<keyword id="KW-1185">Reference proteome</keyword>
<keyword id="KW-0804">Transcription</keyword>
<keyword id="KW-0805">Transcription regulation</keyword>
<proteinExistence type="evidence at protein level"/>
<accession>O43763</accession>
<accession>Q9UD56</accession>
<accession>Q9UQ48</accession>
<evidence type="ECO:0000250" key="1"/>
<evidence type="ECO:0000255" key="2">
    <source>
        <dbReference type="PROSITE-ProRule" id="PRU00108"/>
    </source>
</evidence>
<evidence type="ECO:0000256" key="3">
    <source>
        <dbReference type="SAM" id="MobiDB-lite"/>
    </source>
</evidence>
<evidence type="ECO:0000305" key="4"/>
<evidence type="ECO:0007829" key="5">
    <source>
        <dbReference type="PDB" id="3A03"/>
    </source>
</evidence>
<reference key="1">
    <citation type="journal article" date="1999" name="J. Biol. Chem.">
        <title>An enhancer element for expression of the Ncx (Enx, Hox11L1) gene in neural crest-derived cells.</title>
        <authorList>
            <person name="Iitsuka Y."/>
            <person name="Shimizu H."/>
            <person name="Kang M.M."/>
            <person name="Sasagawa K."/>
            <person name="Sekiya S."/>
            <person name="Tokuhisa T."/>
            <person name="Hatano M."/>
        </authorList>
    </citation>
    <scope>NUCLEOTIDE SEQUENCE [MRNA]</scope>
</reference>
<reference key="2">
    <citation type="submission" date="1997-11" db="EMBL/GenBank/DDBJ databases">
        <title>Genomic characterization and chromosomal location of the human homeobox gene HOX11L1.</title>
        <authorList>
            <person name="Delgado P."/>
            <person name="Rodriguez R.E."/>
            <person name="Gonzalez-Sarmiento R."/>
        </authorList>
    </citation>
    <scope>NUCLEOTIDE SEQUENCE [GENOMIC DNA]</scope>
</reference>
<reference key="3">
    <citation type="journal article" date="2005" name="Nature">
        <title>Generation and annotation of the DNA sequences of human chromosomes 2 and 4.</title>
        <authorList>
            <person name="Hillier L.W."/>
            <person name="Graves T.A."/>
            <person name="Fulton R.S."/>
            <person name="Fulton L.A."/>
            <person name="Pepin K.H."/>
            <person name="Minx P."/>
            <person name="Wagner-McPherson C."/>
            <person name="Layman D."/>
            <person name="Wylie K."/>
            <person name="Sekhon M."/>
            <person name="Becker M.C."/>
            <person name="Fewell G.A."/>
            <person name="Delehaunty K.D."/>
            <person name="Miner T.L."/>
            <person name="Nash W.E."/>
            <person name="Kremitzki C."/>
            <person name="Oddy L."/>
            <person name="Du H."/>
            <person name="Sun H."/>
            <person name="Bradshaw-Cordum H."/>
            <person name="Ali J."/>
            <person name="Carter J."/>
            <person name="Cordes M."/>
            <person name="Harris A."/>
            <person name="Isak A."/>
            <person name="van Brunt A."/>
            <person name="Nguyen C."/>
            <person name="Du F."/>
            <person name="Courtney L."/>
            <person name="Kalicki J."/>
            <person name="Ozersky P."/>
            <person name="Abbott S."/>
            <person name="Armstrong J."/>
            <person name="Belter E.A."/>
            <person name="Caruso L."/>
            <person name="Cedroni M."/>
            <person name="Cotton M."/>
            <person name="Davidson T."/>
            <person name="Desai A."/>
            <person name="Elliott G."/>
            <person name="Erb T."/>
            <person name="Fronick C."/>
            <person name="Gaige T."/>
            <person name="Haakenson W."/>
            <person name="Haglund K."/>
            <person name="Holmes A."/>
            <person name="Harkins R."/>
            <person name="Kim K."/>
            <person name="Kruchowski S.S."/>
            <person name="Strong C.M."/>
            <person name="Grewal N."/>
            <person name="Goyea E."/>
            <person name="Hou S."/>
            <person name="Levy A."/>
            <person name="Martinka S."/>
            <person name="Mead K."/>
            <person name="McLellan M.D."/>
            <person name="Meyer R."/>
            <person name="Randall-Maher J."/>
            <person name="Tomlinson C."/>
            <person name="Dauphin-Kohlberg S."/>
            <person name="Kozlowicz-Reilly A."/>
            <person name="Shah N."/>
            <person name="Swearengen-Shahid S."/>
            <person name="Snider J."/>
            <person name="Strong J.T."/>
            <person name="Thompson J."/>
            <person name="Yoakum M."/>
            <person name="Leonard S."/>
            <person name="Pearman C."/>
            <person name="Trani L."/>
            <person name="Radionenko M."/>
            <person name="Waligorski J.E."/>
            <person name="Wang C."/>
            <person name="Rock S.M."/>
            <person name="Tin-Wollam A.-M."/>
            <person name="Maupin R."/>
            <person name="Latreille P."/>
            <person name="Wendl M.C."/>
            <person name="Yang S.-P."/>
            <person name="Pohl C."/>
            <person name="Wallis J.W."/>
            <person name="Spieth J."/>
            <person name="Bieri T.A."/>
            <person name="Berkowicz N."/>
            <person name="Nelson J.O."/>
            <person name="Osborne J."/>
            <person name="Ding L."/>
            <person name="Meyer R."/>
            <person name="Sabo A."/>
            <person name="Shotland Y."/>
            <person name="Sinha P."/>
            <person name="Wohldmann P.E."/>
            <person name="Cook L.L."/>
            <person name="Hickenbotham M.T."/>
            <person name="Eldred J."/>
            <person name="Williams D."/>
            <person name="Jones T.A."/>
            <person name="She X."/>
            <person name="Ciccarelli F.D."/>
            <person name="Izaurralde E."/>
            <person name="Taylor J."/>
            <person name="Schmutz J."/>
            <person name="Myers R.M."/>
            <person name="Cox D.R."/>
            <person name="Huang X."/>
            <person name="McPherson J.D."/>
            <person name="Mardis E.R."/>
            <person name="Clifton S.W."/>
            <person name="Warren W.C."/>
            <person name="Chinwalla A.T."/>
            <person name="Eddy S.R."/>
            <person name="Marra M.A."/>
            <person name="Ovcharenko I."/>
            <person name="Furey T.S."/>
            <person name="Miller W."/>
            <person name="Eichler E.E."/>
            <person name="Bork P."/>
            <person name="Suyama M."/>
            <person name="Torrents D."/>
            <person name="Waterston R.H."/>
            <person name="Wilson R.K."/>
        </authorList>
    </citation>
    <scope>NUCLEOTIDE SEQUENCE [LARGE SCALE GENOMIC DNA]</scope>
</reference>
<reference key="4">
    <citation type="journal article" date="2004" name="Genome Res.">
        <title>The status, quality, and expansion of the NIH full-length cDNA project: the Mammalian Gene Collection (MGC).</title>
        <authorList>
            <consortium name="The MGC Project Team"/>
        </authorList>
    </citation>
    <scope>NUCLEOTIDE SEQUENCE [LARGE SCALE MRNA]</scope>
    <source>
        <tissue>Brain</tissue>
    </source>
</reference>
<reference key="5">
    <citation type="journal article" date="1994" name="Gene">
        <title>Identification of homeobox genes expressed in human haemopoietic progenitor cells.</title>
        <authorList>
            <person name="Moretti P."/>
            <person name="Simmons P."/>
            <person name="Thomas P."/>
            <person name="Haylock D."/>
            <person name="Rathjen P."/>
            <person name="Vadas M."/>
            <person name="D'Andrea R."/>
        </authorList>
    </citation>
    <scope>NUCLEOTIDE SEQUENCE [MRNA] OF 165-203</scope>
    <source>
        <tissue>Bone marrow</tissue>
    </source>
</reference>
<reference key="6">
    <citation type="journal article" date="2010" name="EMBO J.">
        <title>Cooperative DNA-binding and sequence-recognition mechanism of aristaless and clawless.</title>
        <authorList>
            <person name="Miyazono K."/>
            <person name="Zhi Y."/>
            <person name="Takamura Y."/>
            <person name="Nagata K."/>
            <person name="Saigo K."/>
            <person name="Kojima T."/>
            <person name="Tanokura M."/>
        </authorList>
    </citation>
    <scope>X-RAY CRYSTALLOGRAPHY (1.54 ANGSTROMS) OF 162-216</scope>
    <scope>DNA-BINDING</scope>
</reference>
<protein>
    <recommendedName>
        <fullName>T-cell leukemia homeobox protein 2</fullName>
    </recommendedName>
    <alternativeName>
        <fullName>Homeobox protein Hox-11L1</fullName>
    </alternativeName>
    <alternativeName>
        <fullName>Neural crest homeobox protein</fullName>
    </alternativeName>
</protein>